<comment type="function">
    <text evidence="5 7 9 10 13 14">Component of the male-specific lethal (MSL) histone acetyltransferase complex, a multiprotein complex essential for elevating transcription of the single X chromosome in the male (X chromosome dosage compensation) (PubMed:17936709, PubMed:19029895, PubMed:7768187). The MSL complex specifically associates with the single X chromosome in males and mediates formation of H4K16ac, promoting a two-fold activation of X chromosome (PubMed:16543150, PubMed:18510926). Acts as a histone reader that specifically recognizes and binds histone H3 trimethylated at 'Lys-36' (H3K36me3) and histone H4 monomethylated at 'Lys-20' (H4K20me1) (PubMed:17936709, PubMed:19029895). Within the MSL complex, mediates the spreading of the MSL complex from initiation sites on the male X chromosome to flanking chromatin (PubMed:19029895). Following initial recruitment of the MSL complex to male X chromosome by msl-2, msl-3 binds H3K36me3 and promotes spreading of the MSL complex in cis (PubMed:19029895). In addition to its role in dosage compensation in males, promotes germline stem cell differentiation in females: recognizes and binds H3K36me3, promoting recruitment of the ATAC complex and transcription of genes, such as RpS19b (PubMed:34878097).</text>
</comment>
<comment type="subunit">
    <text evidence="3 4 5 9 12">Component of the male-specific lethal (MSL) histone acetyltransferase complex, composed of mof, mle, msl-1, msl-2 and msl-3 proteins, as well as roX1 and roX2 non-coding RNAs (PubMed:10679323, PubMed:11014199, PubMed:16543150, PubMed:18510926). Component of a maternal MSL subcomplex composed of mof, msl-1 and msl-3 (PubMed:32502394).</text>
</comment>
<comment type="subcellular location">
    <subcellularLocation>
        <location evidence="1 14">Nucleus</location>
    </subcellularLocation>
    <subcellularLocation>
        <location evidence="5 9 10 14">Chromosome</location>
    </subcellularLocation>
    <text evidence="4 5 9 10">Msl-3 is associated with hundreds of discrete sites along the length of the X chromosome in males and not in females, and is also associated with 10-20 autosomal sites in males (PubMed:16543150, PubMed:18510926, PubMed:19029895). Recruited to the male X chromosome following association with roX1 and roX2 non-coding RNAs (PubMed:11014199).</text>
</comment>
<comment type="domain">
    <text evidence="4 10">The chromo domain specifically recognizes and binds histone H3 trimethylated at 'Lys-36' (H3K36me3) (PubMed:19029895). The chromo domain also mediates association with roX1 and roX2 non-coding RNAs, promoting recruitment to the male X chromosome (PubMed:11014199).</text>
</comment>
<comment type="PTM">
    <text evidence="11">Ubiquitinated by msl-2.</text>
</comment>
<sequence>MTELRDETPLFHKGEIVLCYEPDKSKARVLYTSKVLNVFERRNEHGLRFYEYKIHFQGWRPSYDRCVRATVLLKDTEENRQLQRELAEAAKLQIRGDYSYKGTPDKPSAKKKRGGKAAHVEEPIVVPMDTGHLEAEHEMAPTPRAAGNRTRDNSGGKRKEKPPSGDGRLKGNRGRQTETFYNNAINDVSVYNHVPQEDRIMMRVSERLRELIEYDRNMIKVLGKQHALPARVPIVTIMENFVKQQAVELAISIKQDSSRARNTQSRNARMEREYDRVMSTVCMLKEVVDGLRIYFEFHVDDHLLYTEEKEYVHNYLTDDNMRNCSLILNKSYEYINPSGDTELIGLDGTPVVEGSGDTNGQIGVINIGGPEYEKQLQKCLLYIVTASGKNTAQAYERTSPYTAAYKLPVEMRGFLNETFKWRLLSAESPPEKSMVFGAPHLVRLMIKMPMFLNASPISNKKLEDLLPHLDAFINYLENHREWFDRENFVNSTALPQEDLQRELLDSLDGIAA</sequence>
<proteinExistence type="evidence at protein level"/>
<organism>
    <name type="scientific">Drosophila melanogaster</name>
    <name type="common">Fruit fly</name>
    <dbReference type="NCBI Taxonomy" id="7227"/>
    <lineage>
        <taxon>Eukaryota</taxon>
        <taxon>Metazoa</taxon>
        <taxon>Ecdysozoa</taxon>
        <taxon>Arthropoda</taxon>
        <taxon>Hexapoda</taxon>
        <taxon>Insecta</taxon>
        <taxon>Pterygota</taxon>
        <taxon>Neoptera</taxon>
        <taxon>Endopterygota</taxon>
        <taxon>Diptera</taxon>
        <taxon>Brachycera</taxon>
        <taxon>Muscomorpha</taxon>
        <taxon>Ephydroidea</taxon>
        <taxon>Drosophilidae</taxon>
        <taxon>Drosophila</taxon>
        <taxon>Sophophora</taxon>
    </lineage>
</organism>
<protein>
    <recommendedName>
        <fullName evidence="15">Protein male-specific lethal-3</fullName>
    </recommendedName>
</protein>
<name>MSL3_DROME</name>
<reference key="1">
    <citation type="journal article" date="1995" name="Development">
        <title>Molecular characterization of the male-specific lethal-3 gene and investigations of the regulation of dosage compensation in Drosophila.</title>
        <authorList>
            <person name="Gorman M."/>
            <person name="Franke A."/>
            <person name="Baker B.S."/>
        </authorList>
    </citation>
    <scope>NUCLEOTIDE SEQUENCE [GENOMIC DNA]</scope>
    <scope>VARIANTS THR-184 AND GLY-352</scope>
    <scope>FUNCTION</scope>
    <scope>SUBCELLULAR LOCATION</scope>
    <source>
        <tissue>Larva</tissue>
    </source>
</reference>
<reference key="2">
    <citation type="journal article" date="2007" name="Proc. Natl. Acad. Sci. U.S.A.">
        <title>Species-specific positive selection of the male-specific lethal complex that participates in dosage compensation in Drosophila.</title>
        <authorList>
            <person name="Rodriguez M.A."/>
            <person name="Vermaak D."/>
            <person name="Bayes J.J."/>
            <person name="Malik H.S."/>
        </authorList>
    </citation>
    <scope>NUCLEOTIDE SEQUENCE [GENOMIC DNA]</scope>
    <scope>VARIANTS THR-184; GLY-352 AND VAL-503</scope>
    <source>
        <strain>15</strain>
        <strain>3</strain>
        <strain>5</strain>
        <strain>7</strain>
        <strain>Amherst</strain>
        <strain>Congo13</strain>
        <strain>Congo194</strain>
        <strain>Congo216</strain>
        <strain>Congo346</strain>
    </source>
</reference>
<reference key="3">
    <citation type="journal article" date="2000" name="Science">
        <title>The genome sequence of Drosophila melanogaster.</title>
        <authorList>
            <person name="Adams M.D."/>
            <person name="Celniker S.E."/>
            <person name="Holt R.A."/>
            <person name="Evans C.A."/>
            <person name="Gocayne J.D."/>
            <person name="Amanatides P.G."/>
            <person name="Scherer S.E."/>
            <person name="Li P.W."/>
            <person name="Hoskins R.A."/>
            <person name="Galle R.F."/>
            <person name="George R.A."/>
            <person name="Lewis S.E."/>
            <person name="Richards S."/>
            <person name="Ashburner M."/>
            <person name="Henderson S.N."/>
            <person name="Sutton G.G."/>
            <person name="Wortman J.R."/>
            <person name="Yandell M.D."/>
            <person name="Zhang Q."/>
            <person name="Chen L.X."/>
            <person name="Brandon R.C."/>
            <person name="Rogers Y.-H.C."/>
            <person name="Blazej R.G."/>
            <person name="Champe M."/>
            <person name="Pfeiffer B.D."/>
            <person name="Wan K.H."/>
            <person name="Doyle C."/>
            <person name="Baxter E.G."/>
            <person name="Helt G."/>
            <person name="Nelson C.R."/>
            <person name="Miklos G.L.G."/>
            <person name="Abril J.F."/>
            <person name="Agbayani A."/>
            <person name="An H.-J."/>
            <person name="Andrews-Pfannkoch C."/>
            <person name="Baldwin D."/>
            <person name="Ballew R.M."/>
            <person name="Basu A."/>
            <person name="Baxendale J."/>
            <person name="Bayraktaroglu L."/>
            <person name="Beasley E.M."/>
            <person name="Beeson K.Y."/>
            <person name="Benos P.V."/>
            <person name="Berman B.P."/>
            <person name="Bhandari D."/>
            <person name="Bolshakov S."/>
            <person name="Borkova D."/>
            <person name="Botchan M.R."/>
            <person name="Bouck J."/>
            <person name="Brokstein P."/>
            <person name="Brottier P."/>
            <person name="Burtis K.C."/>
            <person name="Busam D.A."/>
            <person name="Butler H."/>
            <person name="Cadieu E."/>
            <person name="Center A."/>
            <person name="Chandra I."/>
            <person name="Cherry J.M."/>
            <person name="Cawley S."/>
            <person name="Dahlke C."/>
            <person name="Davenport L.B."/>
            <person name="Davies P."/>
            <person name="de Pablos B."/>
            <person name="Delcher A."/>
            <person name="Deng Z."/>
            <person name="Mays A.D."/>
            <person name="Dew I."/>
            <person name="Dietz S.M."/>
            <person name="Dodson K."/>
            <person name="Doup L.E."/>
            <person name="Downes M."/>
            <person name="Dugan-Rocha S."/>
            <person name="Dunkov B.C."/>
            <person name="Dunn P."/>
            <person name="Durbin K.J."/>
            <person name="Evangelista C.C."/>
            <person name="Ferraz C."/>
            <person name="Ferriera S."/>
            <person name="Fleischmann W."/>
            <person name="Fosler C."/>
            <person name="Gabrielian A.E."/>
            <person name="Garg N.S."/>
            <person name="Gelbart W.M."/>
            <person name="Glasser K."/>
            <person name="Glodek A."/>
            <person name="Gong F."/>
            <person name="Gorrell J.H."/>
            <person name="Gu Z."/>
            <person name="Guan P."/>
            <person name="Harris M."/>
            <person name="Harris N.L."/>
            <person name="Harvey D.A."/>
            <person name="Heiman T.J."/>
            <person name="Hernandez J.R."/>
            <person name="Houck J."/>
            <person name="Hostin D."/>
            <person name="Houston K.A."/>
            <person name="Howland T.J."/>
            <person name="Wei M.-H."/>
            <person name="Ibegwam C."/>
            <person name="Jalali M."/>
            <person name="Kalush F."/>
            <person name="Karpen G.H."/>
            <person name="Ke Z."/>
            <person name="Kennison J.A."/>
            <person name="Ketchum K.A."/>
            <person name="Kimmel B.E."/>
            <person name="Kodira C.D."/>
            <person name="Kraft C.L."/>
            <person name="Kravitz S."/>
            <person name="Kulp D."/>
            <person name="Lai Z."/>
            <person name="Lasko P."/>
            <person name="Lei Y."/>
            <person name="Levitsky A.A."/>
            <person name="Li J.H."/>
            <person name="Li Z."/>
            <person name="Liang Y."/>
            <person name="Lin X."/>
            <person name="Liu X."/>
            <person name="Mattei B."/>
            <person name="McIntosh T.C."/>
            <person name="McLeod M.P."/>
            <person name="McPherson D."/>
            <person name="Merkulov G."/>
            <person name="Milshina N.V."/>
            <person name="Mobarry C."/>
            <person name="Morris J."/>
            <person name="Moshrefi A."/>
            <person name="Mount S.M."/>
            <person name="Moy M."/>
            <person name="Murphy B."/>
            <person name="Murphy L."/>
            <person name="Muzny D.M."/>
            <person name="Nelson D.L."/>
            <person name="Nelson D.R."/>
            <person name="Nelson K.A."/>
            <person name="Nixon K."/>
            <person name="Nusskern D.R."/>
            <person name="Pacleb J.M."/>
            <person name="Palazzolo M."/>
            <person name="Pittman G.S."/>
            <person name="Pan S."/>
            <person name="Pollard J."/>
            <person name="Puri V."/>
            <person name="Reese M.G."/>
            <person name="Reinert K."/>
            <person name="Remington K."/>
            <person name="Saunders R.D.C."/>
            <person name="Scheeler F."/>
            <person name="Shen H."/>
            <person name="Shue B.C."/>
            <person name="Siden-Kiamos I."/>
            <person name="Simpson M."/>
            <person name="Skupski M.P."/>
            <person name="Smith T.J."/>
            <person name="Spier E."/>
            <person name="Spradling A.C."/>
            <person name="Stapleton M."/>
            <person name="Strong R."/>
            <person name="Sun E."/>
            <person name="Svirskas R."/>
            <person name="Tector C."/>
            <person name="Turner R."/>
            <person name="Venter E."/>
            <person name="Wang A.H."/>
            <person name="Wang X."/>
            <person name="Wang Z.-Y."/>
            <person name="Wassarman D.A."/>
            <person name="Weinstock G.M."/>
            <person name="Weissenbach J."/>
            <person name="Williams S.M."/>
            <person name="Woodage T."/>
            <person name="Worley K.C."/>
            <person name="Wu D."/>
            <person name="Yang S."/>
            <person name="Yao Q.A."/>
            <person name="Ye J."/>
            <person name="Yeh R.-F."/>
            <person name="Zaveri J.S."/>
            <person name="Zhan M."/>
            <person name="Zhang G."/>
            <person name="Zhao Q."/>
            <person name="Zheng L."/>
            <person name="Zheng X.H."/>
            <person name="Zhong F.N."/>
            <person name="Zhong W."/>
            <person name="Zhou X."/>
            <person name="Zhu S.C."/>
            <person name="Zhu X."/>
            <person name="Smith H.O."/>
            <person name="Gibbs R.A."/>
            <person name="Myers E.W."/>
            <person name="Rubin G.M."/>
            <person name="Venter J.C."/>
        </authorList>
    </citation>
    <scope>NUCLEOTIDE SEQUENCE [LARGE SCALE GENOMIC DNA]</scope>
    <source>
        <strain>Berkeley</strain>
    </source>
</reference>
<reference key="4">
    <citation type="journal article" date="2002" name="Genome Biol.">
        <title>Annotation of the Drosophila melanogaster euchromatic genome: a systematic review.</title>
        <authorList>
            <person name="Misra S."/>
            <person name="Crosby M.A."/>
            <person name="Mungall C.J."/>
            <person name="Matthews B.B."/>
            <person name="Campbell K.S."/>
            <person name="Hradecky P."/>
            <person name="Huang Y."/>
            <person name="Kaminker J.S."/>
            <person name="Millburn G.H."/>
            <person name="Prochnik S.E."/>
            <person name="Smith C.D."/>
            <person name="Tupy J.L."/>
            <person name="Whitfield E.J."/>
            <person name="Bayraktaroglu L."/>
            <person name="Berman B.P."/>
            <person name="Bettencourt B.R."/>
            <person name="Celniker S.E."/>
            <person name="de Grey A.D.N.J."/>
            <person name="Drysdale R.A."/>
            <person name="Harris N.L."/>
            <person name="Richter J."/>
            <person name="Russo S."/>
            <person name="Schroeder A.J."/>
            <person name="Shu S.Q."/>
            <person name="Stapleton M."/>
            <person name="Yamada C."/>
            <person name="Ashburner M."/>
            <person name="Gelbart W.M."/>
            <person name="Rubin G.M."/>
            <person name="Lewis S.E."/>
        </authorList>
    </citation>
    <scope>GENOME REANNOTATION</scope>
    <source>
        <strain>Berkeley</strain>
    </source>
</reference>
<reference key="5">
    <citation type="journal article" date="2002" name="Genome Biol.">
        <title>A Drosophila full-length cDNA resource.</title>
        <authorList>
            <person name="Stapleton M."/>
            <person name="Carlson J.W."/>
            <person name="Brokstein P."/>
            <person name="Yu C."/>
            <person name="Champe M."/>
            <person name="George R.A."/>
            <person name="Guarin H."/>
            <person name="Kronmiller B."/>
            <person name="Pacleb J.M."/>
            <person name="Park S."/>
            <person name="Wan K.H."/>
            <person name="Rubin G.M."/>
            <person name="Celniker S.E."/>
        </authorList>
    </citation>
    <scope>NUCLEOTIDE SEQUENCE [LARGE SCALE MRNA]</scope>
    <source>
        <strain>Berkeley</strain>
        <tissue>Embryo</tissue>
    </source>
</reference>
<reference key="6">
    <citation type="journal article" date="2007" name="Genetics">
        <title>Pervasive and largely lineage-specific adaptive protein evolution in the dosage compensation complex of Drosophila melanogaster.</title>
        <authorList>
            <person name="Levine M.T."/>
            <person name="Holloway A.K."/>
            <person name="Arshad U."/>
            <person name="Begun D.J."/>
        </authorList>
    </citation>
    <scope>NUCLEOTIDE SEQUENCE [GENOMIC DNA] OF 180-509</scope>
    <scope>VARIANTS THR-184; MET-220; ALA-232; ASN-265; LYS-310; GLY-325; GLY-352; HIS-405; CYS-412; SER-430 AND PRO-465</scope>
    <source>
        <strain>399A</strain>
        <strain>591A</strain>
        <strain>639A</strain>
        <strain>732A</strain>
        <strain>774A</strain>
        <strain>799A</strain>
        <strain>820A</strain>
        <strain>852A</strain>
        <strain>859A</strain>
    </source>
</reference>
<reference key="7">
    <citation type="journal article" date="2000" name="Curr. Biol.">
        <title>Ordered assembly of roX RNAs into MSL complexes on the dosage-compensated X chromosome in Drosophila.</title>
        <authorList>
            <person name="Meller V.H."/>
            <person name="Gordadze P.R."/>
            <person name="Park Y."/>
            <person name="Chu X."/>
            <person name="Stuckenholz C."/>
            <person name="Kelley R.L."/>
            <person name="Kuroda M.I."/>
        </authorList>
    </citation>
    <scope>IDENTIFICATION IN THE MSL COMPLEX</scope>
</reference>
<reference key="8">
    <citation type="journal article" date="2000" name="Nature">
        <title>Chromodomains are protein-RNA interaction modules.</title>
        <authorList>
            <person name="Akhtar A."/>
            <person name="Zink D."/>
            <person name="Becker P.B."/>
        </authorList>
    </citation>
    <scope>IDENTIFICATION IN THE MSL COMPLEX</scope>
    <scope>SUBCELLULAR LOCATION</scope>
    <scope>DOMAIN</scope>
</reference>
<reference key="9">
    <citation type="journal article" date="2006" name="Mol. Cell">
        <title>Nuclear pore components are involved in the transcriptional regulation of dosage compensation in Drosophila.</title>
        <authorList>
            <person name="Mendjan S."/>
            <person name="Taipale M."/>
            <person name="Kind J."/>
            <person name="Holz H."/>
            <person name="Gebhardt P."/>
            <person name="Schelder M."/>
            <person name="Vermeulen M."/>
            <person name="Buscaino A."/>
            <person name="Duncan K."/>
            <person name="Mueller J."/>
            <person name="Wilm M."/>
            <person name="Stunnenberg H.G."/>
            <person name="Saumweber H."/>
            <person name="Akhtar A."/>
        </authorList>
    </citation>
    <scope>FUNCTION</scope>
    <scope>IDENTIFICATION IN THE MSL COMPLEX</scope>
    <scope>SUBCELLULAR LOCATION</scope>
</reference>
<reference key="10">
    <citation type="journal article" date="2007" name="Mol. Cell">
        <title>MSL complex is attracted to genes marked by H3K36 trimethylation using a sequence-independent mechanism.</title>
        <authorList>
            <person name="Larschan E."/>
            <person name="Alekseyenko A.A."/>
            <person name="Gortchakov A.A."/>
            <person name="Peng S."/>
            <person name="Li B."/>
            <person name="Yang P."/>
            <person name="Workman J.L."/>
            <person name="Park P.J."/>
            <person name="Kuroda M.I."/>
        </authorList>
    </citation>
    <scope>FUNCTION</scope>
</reference>
<reference key="11">
    <citation type="journal article" date="2008" name="Cell">
        <title>Genome-wide analysis reveals MOF as a key regulator of dosage compensation and gene expression in Drosophila.</title>
        <authorList>
            <person name="Kind J."/>
            <person name="Vaquerizas J.M."/>
            <person name="Gebhardt P."/>
            <person name="Gentzel M."/>
            <person name="Luscombe N.M."/>
            <person name="Bertone P."/>
            <person name="Akhtar A."/>
        </authorList>
    </citation>
    <scope>FUNCTION</scope>
    <scope>IDENTIFICATION IN THE MSL COMPLEX</scope>
    <scope>SUBCELLULAR LOCATION</scope>
</reference>
<reference key="12">
    <citation type="journal article" date="2008" name="Nat. Struct. Mol. Biol.">
        <title>The MSL3 chromodomain directs a key targeting step for dosage compensation of the Drosophila melanogaster X chromosome.</title>
        <authorList>
            <person name="Sural T.H."/>
            <person name="Peng S."/>
            <person name="Li B."/>
            <person name="Workman J.L."/>
            <person name="Park P.J."/>
            <person name="Kuroda M.I."/>
        </authorList>
    </citation>
    <scope>FUNCTION</scope>
    <scope>SUBCELLULAR LOCATION</scope>
    <scope>DOMAIN</scope>
    <scope>MUTAGENESIS OF TRP-59 AND 62-SER--ASP-64</scope>
</reference>
<reference key="13">
    <citation type="journal article" date="2012" name="Mol. Cell">
        <title>MSL2 combines sensor and effector functions in homeostatic control of the Drosophila dosage compensation machinery.</title>
        <authorList>
            <person name="Villa R."/>
            <person name="Forne I."/>
            <person name="Mueller M."/>
            <person name="Imhof A."/>
            <person name="Straub T."/>
            <person name="Becker P.B."/>
        </authorList>
    </citation>
    <scope>UBIQUITINATION</scope>
</reference>
<reference key="14">
    <citation type="journal article" date="2020" name="Cell">
        <title>Intergenerationally maintained histone H4 lysine 16 acetylation is instructive for future gene activation.</title>
        <authorList>
            <person name="Samata M."/>
            <person name="Alexiadis A."/>
            <person name="Richard G."/>
            <person name="Georgiev P."/>
            <person name="Nuebler J."/>
            <person name="Kulkarni T."/>
            <person name="Renschler G."/>
            <person name="Basilicata M.F."/>
            <person name="Zenk F.L."/>
            <person name="Shvedunova M."/>
            <person name="Semplicio G."/>
            <person name="Mirny L."/>
            <person name="Iovino N."/>
            <person name="Akhtar A."/>
        </authorList>
    </citation>
    <scope>IDENTIFICATION IN THE MSL SUBCOMPLEX</scope>
</reference>
<reference key="15">
    <citation type="journal article" date="2022" name="Development">
        <title>Msl3 promotes germline stem cell differentiation in female Drosophila.</title>
        <authorList>
            <person name="McCarthy A."/>
            <person name="Sarkar K."/>
            <person name="Martin E.T."/>
            <person name="Upadhyay M."/>
            <person name="Jang S."/>
            <person name="Williams N.D."/>
            <person name="Forni P.E."/>
            <person name="Buszczak M."/>
            <person name="Rangan P."/>
        </authorList>
    </citation>
    <scope>FUNCTION</scope>
</reference>
<reference evidence="17" key="16">
    <citation type="journal article" date="2010" name="Nat. Struct. Mol. Biol.">
        <title>Corecognition of DNA and a methylated histone tail by the MSL3 chromodomain.</title>
        <authorList>
            <person name="Kim D."/>
            <person name="Blus B.J."/>
            <person name="Chandra V."/>
            <person name="Huang P."/>
            <person name="Rastinejad F."/>
            <person name="Khorasanizadeh S."/>
        </authorList>
    </citation>
    <scope>X-RAY CRYSTALLOGRAPHY (1.29 ANGSTROMS) OF 1-92</scope>
    <scope>FUNCTION</scope>
    <scope>DOMAIN</scope>
</reference>
<accession>P50536</accession>
<accession>A8BP72</accession>
<accession>A8BP74</accession>
<accession>A8BP87</accession>
<accession>A8BP92</accession>
<accession>A8IL14</accession>
<accession>A8IL17</accession>
<accession>A8IL22</accession>
<accession>A8IL25</accession>
<accession>A8IL30</accession>
<accession>A8IL33</accession>
<accession>A8IL37</accession>
<accession>A8IL41</accession>
<accession>A8IL46</accession>
<accession>Q8IQ74</accession>
<accession>Q9VS18</accession>
<dbReference type="EMBL" id="X81321">
    <property type="protein sequence ID" value="CAA57101.1"/>
    <property type="molecule type" value="Genomic_DNA"/>
</dbReference>
<dbReference type="EMBL" id="EF653847">
    <property type="protein sequence ID" value="ABV49039.1"/>
    <property type="molecule type" value="Genomic_DNA"/>
</dbReference>
<dbReference type="EMBL" id="EF653848">
    <property type="protein sequence ID" value="ABV49040.1"/>
    <property type="molecule type" value="Genomic_DNA"/>
</dbReference>
<dbReference type="EMBL" id="EF653849">
    <property type="protein sequence ID" value="ABV49041.1"/>
    <property type="molecule type" value="Genomic_DNA"/>
</dbReference>
<dbReference type="EMBL" id="EF653850">
    <property type="protein sequence ID" value="ABV49042.1"/>
    <property type="molecule type" value="Genomic_DNA"/>
</dbReference>
<dbReference type="EMBL" id="EF653851">
    <property type="protein sequence ID" value="ABV49043.1"/>
    <property type="molecule type" value="Genomic_DNA"/>
</dbReference>
<dbReference type="EMBL" id="EF653852">
    <property type="protein sequence ID" value="ABV49044.1"/>
    <property type="molecule type" value="Genomic_DNA"/>
</dbReference>
<dbReference type="EMBL" id="EF653853">
    <property type="protein sequence ID" value="ABV49045.1"/>
    <property type="molecule type" value="Genomic_DNA"/>
</dbReference>
<dbReference type="EMBL" id="EF653854">
    <property type="protein sequence ID" value="ABV49046.1"/>
    <property type="molecule type" value="Genomic_DNA"/>
</dbReference>
<dbReference type="EMBL" id="EF653855">
    <property type="protein sequence ID" value="ABV49047.1"/>
    <property type="molecule type" value="Genomic_DNA"/>
</dbReference>
<dbReference type="EMBL" id="AE014296">
    <property type="protein sequence ID" value="AAF50612.1"/>
    <property type="molecule type" value="Genomic_DNA"/>
</dbReference>
<dbReference type="EMBL" id="AY071074">
    <property type="protein sequence ID" value="AAL48696.1"/>
    <property type="molecule type" value="mRNA"/>
</dbReference>
<dbReference type="EMBL" id="EU167107">
    <property type="protein sequence ID" value="ABV82500.1"/>
    <property type="molecule type" value="Genomic_DNA"/>
</dbReference>
<dbReference type="EMBL" id="EU167108">
    <property type="protein sequence ID" value="ABV82501.1"/>
    <property type="molecule type" value="Genomic_DNA"/>
</dbReference>
<dbReference type="EMBL" id="EU167109">
    <property type="protein sequence ID" value="ABV82502.1"/>
    <property type="molecule type" value="Genomic_DNA"/>
</dbReference>
<dbReference type="EMBL" id="EU167110">
    <property type="protein sequence ID" value="ABV82503.1"/>
    <property type="molecule type" value="Genomic_DNA"/>
</dbReference>
<dbReference type="EMBL" id="EU167112">
    <property type="protein sequence ID" value="ABV82504.1"/>
    <property type="molecule type" value="Genomic_DNA"/>
</dbReference>
<dbReference type="EMBL" id="EU167113">
    <property type="protein sequence ID" value="ABV82505.1"/>
    <property type="molecule type" value="Genomic_DNA"/>
</dbReference>
<dbReference type="EMBL" id="EU167114">
    <property type="protein sequence ID" value="ABV82506.1"/>
    <property type="molecule type" value="Genomic_DNA"/>
</dbReference>
<dbReference type="EMBL" id="EU167115">
    <property type="protein sequence ID" value="ABV82507.1"/>
    <property type="molecule type" value="Genomic_DNA"/>
</dbReference>
<dbReference type="EMBL" id="EU167116">
    <property type="protein sequence ID" value="ABV82508.1"/>
    <property type="molecule type" value="Genomic_DNA"/>
</dbReference>
<dbReference type="PIR" id="S48828">
    <property type="entry name" value="S48828"/>
</dbReference>
<dbReference type="RefSeq" id="NP_523951.1">
    <property type="nucleotide sequence ID" value="NM_079227.3"/>
</dbReference>
<dbReference type="PDB" id="3M9Q">
    <property type="method" value="X-ray"/>
    <property type="resolution" value="1.29 A"/>
    <property type="chains" value="A/B=1-92"/>
</dbReference>
<dbReference type="PDBsum" id="3M9Q"/>
<dbReference type="SMR" id="P50536"/>
<dbReference type="BioGRID" id="64224">
    <property type="interactions" value="45"/>
</dbReference>
<dbReference type="ComplexPortal" id="CPX-2340">
    <property type="entry name" value="Male specific lethal complex"/>
</dbReference>
<dbReference type="DIP" id="DIP-23734N"/>
<dbReference type="FunCoup" id="P50536">
    <property type="interactions" value="779"/>
</dbReference>
<dbReference type="IntAct" id="P50536">
    <property type="interactions" value="15"/>
</dbReference>
<dbReference type="STRING" id="7227.FBpp0076635"/>
<dbReference type="PaxDb" id="7227-FBpp0076635"/>
<dbReference type="ABCD" id="P50536">
    <property type="antibodies" value="3 sequenced antibodies"/>
</dbReference>
<dbReference type="DNASU" id="38779"/>
<dbReference type="EnsemblMetazoa" id="FBtr0076926">
    <property type="protein sequence ID" value="FBpp0076635"/>
    <property type="gene ID" value="FBgn0002775"/>
</dbReference>
<dbReference type="GeneID" id="38779"/>
<dbReference type="KEGG" id="dme:Dmel_CG8631"/>
<dbReference type="AGR" id="FB:FBgn0002775"/>
<dbReference type="CTD" id="38779"/>
<dbReference type="FlyBase" id="FBgn0002775">
    <property type="gene designation" value="msl-3"/>
</dbReference>
<dbReference type="VEuPathDB" id="VectorBase:FBgn0002775"/>
<dbReference type="eggNOG" id="KOG3001">
    <property type="taxonomic scope" value="Eukaryota"/>
</dbReference>
<dbReference type="GeneTree" id="ENSGT00950000182965"/>
<dbReference type="HOGENOM" id="CLU_039566_5_2_1"/>
<dbReference type="InParanoid" id="P50536"/>
<dbReference type="OMA" id="YKGTPDK"/>
<dbReference type="OrthoDB" id="10044771at2759"/>
<dbReference type="PhylomeDB" id="P50536"/>
<dbReference type="Reactome" id="R-DME-3214847">
    <property type="pathway name" value="HATs acetylate histones"/>
</dbReference>
<dbReference type="SignaLink" id="P50536"/>
<dbReference type="BioGRID-ORCS" id="38779">
    <property type="hits" value="0 hits in 1 CRISPR screen"/>
</dbReference>
<dbReference type="EvolutionaryTrace" id="P50536"/>
<dbReference type="GenomeRNAi" id="38779"/>
<dbReference type="PRO" id="PR:P50536"/>
<dbReference type="Proteomes" id="UP000000803">
    <property type="component" value="Chromosome 3L"/>
</dbReference>
<dbReference type="Bgee" id="FBgn0002775">
    <property type="expression patterns" value="Expressed in cleaving embryo and 33 other cell types or tissues"/>
</dbReference>
<dbReference type="ExpressionAtlas" id="P50536">
    <property type="expression patterns" value="baseline and differential"/>
</dbReference>
<dbReference type="GO" id="GO:0010369">
    <property type="term" value="C:chromocenter"/>
    <property type="evidence" value="ECO:0000314"/>
    <property type="project" value="FlyBase"/>
</dbReference>
<dbReference type="GO" id="GO:0072487">
    <property type="term" value="C:MSL complex"/>
    <property type="evidence" value="ECO:0000314"/>
    <property type="project" value="UniProtKB"/>
</dbReference>
<dbReference type="GO" id="GO:0035267">
    <property type="term" value="C:NuA4 histone acetyltransferase complex"/>
    <property type="evidence" value="ECO:0000318"/>
    <property type="project" value="GO_Central"/>
</dbReference>
<dbReference type="GO" id="GO:0000228">
    <property type="term" value="C:nuclear chromosome"/>
    <property type="evidence" value="ECO:0000314"/>
    <property type="project" value="FlyBase"/>
</dbReference>
<dbReference type="GO" id="GO:0005700">
    <property type="term" value="C:polytene chromosome"/>
    <property type="evidence" value="ECO:0000314"/>
    <property type="project" value="FlyBase"/>
</dbReference>
<dbReference type="GO" id="GO:0000805">
    <property type="term" value="C:X chromosome"/>
    <property type="evidence" value="ECO:0000314"/>
    <property type="project" value="UniProtKB"/>
</dbReference>
<dbReference type="GO" id="GO:0016456">
    <property type="term" value="C:X chromosome located dosage compensation complex, transcription activating"/>
    <property type="evidence" value="ECO:0000314"/>
    <property type="project" value="UniProtKB"/>
</dbReference>
<dbReference type="GO" id="GO:0003682">
    <property type="term" value="F:chromatin binding"/>
    <property type="evidence" value="ECO:0000314"/>
    <property type="project" value="FlyBase"/>
</dbReference>
<dbReference type="GO" id="GO:0140003">
    <property type="term" value="F:histone H3K36me3 reader activity"/>
    <property type="evidence" value="ECO:0000314"/>
    <property type="project" value="UniProtKB"/>
</dbReference>
<dbReference type="GO" id="GO:0140046">
    <property type="term" value="F:histone H4K16ac reader activity"/>
    <property type="evidence" value="ECO:0000314"/>
    <property type="project" value="UniProtKB"/>
</dbReference>
<dbReference type="GO" id="GO:0140566">
    <property type="term" value="F:histone reader activity"/>
    <property type="evidence" value="ECO:0000314"/>
    <property type="project" value="UniProtKB"/>
</dbReference>
<dbReference type="GO" id="GO:0106222">
    <property type="term" value="F:lncRNA binding"/>
    <property type="evidence" value="ECO:0000314"/>
    <property type="project" value="UniProtKB"/>
</dbReference>
<dbReference type="GO" id="GO:0035064">
    <property type="term" value="F:methylated histone binding"/>
    <property type="evidence" value="ECO:0000314"/>
    <property type="project" value="UniProtKB"/>
</dbReference>
<dbReference type="GO" id="GO:0003723">
    <property type="term" value="F:RNA binding"/>
    <property type="evidence" value="ECO:0000353"/>
    <property type="project" value="FlyBase"/>
</dbReference>
<dbReference type="GO" id="GO:0006325">
    <property type="term" value="P:chromatin organization"/>
    <property type="evidence" value="ECO:0000315"/>
    <property type="project" value="FlyBase"/>
</dbReference>
<dbReference type="GO" id="GO:0009047">
    <property type="term" value="P:dosage compensation by hyperactivation of X chromosome"/>
    <property type="evidence" value="ECO:0000314"/>
    <property type="project" value="UniProtKB"/>
</dbReference>
<dbReference type="GO" id="GO:0007281">
    <property type="term" value="P:germ cell development"/>
    <property type="evidence" value="ECO:0000314"/>
    <property type="project" value="UniProtKB"/>
</dbReference>
<dbReference type="GO" id="GO:0048599">
    <property type="term" value="P:oocyte development"/>
    <property type="evidence" value="ECO:0000314"/>
    <property type="project" value="UniProtKB"/>
</dbReference>
<dbReference type="GO" id="GO:0006355">
    <property type="term" value="P:regulation of DNA-templated transcription"/>
    <property type="evidence" value="ECO:0007669"/>
    <property type="project" value="InterPro"/>
</dbReference>
<dbReference type="GO" id="GO:0035206">
    <property type="term" value="P:regulation of hemocyte proliferation"/>
    <property type="evidence" value="ECO:0000315"/>
    <property type="project" value="FlyBase"/>
</dbReference>
<dbReference type="GO" id="GO:0007549">
    <property type="term" value="P:sex-chromosome dosage compensation"/>
    <property type="evidence" value="ECO:0000315"/>
    <property type="project" value="FlyBase"/>
</dbReference>
<dbReference type="FunFam" id="2.30.30.140:FF:000042">
    <property type="entry name" value="male-specific lethal 3 homolog"/>
    <property type="match status" value="1"/>
</dbReference>
<dbReference type="Gene3D" id="2.30.30.140">
    <property type="match status" value="1"/>
</dbReference>
<dbReference type="Gene3D" id="1.10.274.30">
    <property type="entry name" value="MRG domain"/>
    <property type="match status" value="1"/>
</dbReference>
<dbReference type="InterPro" id="IPR016197">
    <property type="entry name" value="Chromo-like_dom_sf"/>
</dbReference>
<dbReference type="InterPro" id="IPR008676">
    <property type="entry name" value="MRG"/>
</dbReference>
<dbReference type="InterPro" id="IPR038217">
    <property type="entry name" value="MRG_C_sf"/>
</dbReference>
<dbReference type="InterPro" id="IPR026541">
    <property type="entry name" value="MRG_dom"/>
</dbReference>
<dbReference type="InterPro" id="IPR053820">
    <property type="entry name" value="MSL3_chromo-like"/>
</dbReference>
<dbReference type="PANTHER" id="PTHR10880">
    <property type="entry name" value="MORTALITY FACTOR 4-LIKE PROTEIN"/>
    <property type="match status" value="1"/>
</dbReference>
<dbReference type="PANTHER" id="PTHR10880:SF15">
    <property type="entry name" value="MSL COMPLEX SUBUNIT 3"/>
    <property type="match status" value="1"/>
</dbReference>
<dbReference type="Pfam" id="PF05712">
    <property type="entry name" value="MRG"/>
    <property type="match status" value="1"/>
</dbReference>
<dbReference type="Pfam" id="PF22732">
    <property type="entry name" value="MSL3_chromo-like"/>
    <property type="match status" value="1"/>
</dbReference>
<dbReference type="SUPFAM" id="SSF54160">
    <property type="entry name" value="Chromo domain-like"/>
    <property type="match status" value="1"/>
</dbReference>
<dbReference type="PROSITE" id="PS51640">
    <property type="entry name" value="MRG"/>
    <property type="match status" value="1"/>
</dbReference>
<feature type="chain" id="PRO_0000080245" description="Protein male-specific lethal-3">
    <location>
        <begin position="1"/>
        <end position="512"/>
    </location>
</feature>
<feature type="domain" description="Chromo">
    <location>
        <begin position="11"/>
        <end position="90"/>
    </location>
</feature>
<feature type="domain" description="MRG" evidence="1">
    <location>
        <begin position="196"/>
        <end position="500"/>
    </location>
</feature>
<feature type="region of interest" description="Disordered" evidence="2">
    <location>
        <begin position="98"/>
        <end position="175"/>
    </location>
</feature>
<feature type="compositionally biased region" description="Basic and acidic residues" evidence="2">
    <location>
        <begin position="149"/>
        <end position="169"/>
    </location>
</feature>
<feature type="sequence variant" description="In strain: 399A, 774A, 852A, 859A, Congo13, Congo194 and Congo346." evidence="6 8 14">
    <original>A</original>
    <variation>T</variation>
    <location>
        <position position="184"/>
    </location>
</feature>
<feature type="sequence variant" description="In strain: 799A." evidence="8">
    <original>K</original>
    <variation>M</variation>
    <location>
        <position position="220"/>
    </location>
</feature>
<feature type="sequence variant" description="In strain: 399A." evidence="8">
    <original>V</original>
    <variation>A</variation>
    <location>
        <position position="232"/>
    </location>
</feature>
<feature type="sequence variant" description="In strain: 859A." evidence="8">
    <original>S</original>
    <variation>N</variation>
    <location>
        <position position="265"/>
    </location>
</feature>
<feature type="sequence variant" description="In strain: 820A." evidence="8">
    <original>E</original>
    <variation>K</variation>
    <location>
        <position position="310"/>
    </location>
</feature>
<feature type="sequence variant" description="In strain: 639A." evidence="8">
    <original>S</original>
    <variation>G</variation>
    <location>
        <position position="325"/>
    </location>
</feature>
<feature type="sequence variant" description="In strain: 5, 7, 399A, 591A, 799A, 852A, 859A, Amherst, Congo13, Congo194, Congo216 and Congo346." evidence="6 8 14">
    <original>V</original>
    <variation>G</variation>
    <location>
        <position position="352"/>
    </location>
</feature>
<feature type="sequence variant" description="In strain: 639A." evidence="8">
    <original>Y</original>
    <variation>H</variation>
    <location>
        <position position="405"/>
    </location>
</feature>
<feature type="sequence variant" description="In strain: 732A." evidence="8">
    <original>R</original>
    <variation>C</variation>
    <location>
        <position position="412"/>
    </location>
</feature>
<feature type="sequence variant" description="In strain: 639A." evidence="8">
    <original>P</original>
    <variation>S</variation>
    <location>
        <position position="430"/>
    </location>
</feature>
<feature type="sequence variant" description="In strain: 820A." evidence="8">
    <original>L</original>
    <variation>P</variation>
    <location>
        <position position="465"/>
    </location>
</feature>
<feature type="sequence variant" description="In strain: Congo194." evidence="6">
    <original>L</original>
    <variation>V</variation>
    <location>
        <position position="503"/>
    </location>
</feature>
<feature type="mutagenesis site" description="Abolished binding to histone H3 trimethylated at 'Lys-36' (H3K36me3), leading to impaired spreading of the MSL complex from initiation sites on the male X chromosome." evidence="10">
    <original>W</original>
    <variation>G</variation>
    <location>
        <position position="59"/>
    </location>
</feature>
<feature type="mutagenesis site" description="Abolished binding to histone H3 trimethylated at 'Lys-36' (H3K36me3), leading to impaired spreading of the MSL complex from initiation sites on the male X chromosome." evidence="10">
    <original>SYD</original>
    <variation>AAA</variation>
    <location>
        <begin position="62"/>
        <end position="64"/>
    </location>
</feature>
<feature type="strand" evidence="18">
    <location>
        <begin position="16"/>
        <end position="20"/>
    </location>
</feature>
<feature type="strand" evidence="18">
    <location>
        <begin position="30"/>
        <end position="42"/>
    </location>
</feature>
<feature type="strand" evidence="18">
    <location>
        <begin position="48"/>
        <end position="56"/>
    </location>
</feature>
<feature type="helix" evidence="18">
    <location>
        <begin position="61"/>
        <end position="63"/>
    </location>
</feature>
<feature type="strand" evidence="18">
    <location>
        <begin position="65"/>
        <end position="67"/>
    </location>
</feature>
<feature type="helix" evidence="18">
    <location>
        <begin position="69"/>
        <end position="71"/>
    </location>
</feature>
<feature type="strand" evidence="18">
    <location>
        <begin position="72"/>
        <end position="74"/>
    </location>
</feature>
<feature type="helix" evidence="18">
    <location>
        <begin position="77"/>
        <end position="91"/>
    </location>
</feature>
<keyword id="KW-0002">3D-structure</keyword>
<keyword id="KW-0156">Chromatin regulator</keyword>
<keyword id="KW-0158">Chromosome</keyword>
<keyword id="KW-0217">Developmental protein</keyword>
<keyword id="KW-0221">Differentiation</keyword>
<keyword id="KW-0539">Nucleus</keyword>
<keyword id="KW-1185">Reference proteome</keyword>
<keyword id="KW-0804">Transcription</keyword>
<keyword id="KW-0805">Transcription regulation</keyword>
<keyword id="KW-0832">Ubl conjugation</keyword>
<gene>
    <name evidence="15 16" type="primary">msl-3</name>
    <name evidence="16" type="ORF">CG8631</name>
</gene>
<evidence type="ECO:0000255" key="1">
    <source>
        <dbReference type="PROSITE-ProRule" id="PRU00972"/>
    </source>
</evidence>
<evidence type="ECO:0000256" key="2">
    <source>
        <dbReference type="SAM" id="MobiDB-lite"/>
    </source>
</evidence>
<evidence type="ECO:0000269" key="3">
    <source>
    </source>
</evidence>
<evidence type="ECO:0000269" key="4">
    <source>
    </source>
</evidence>
<evidence type="ECO:0000269" key="5">
    <source>
    </source>
</evidence>
<evidence type="ECO:0000269" key="6">
    <source>
    </source>
</evidence>
<evidence type="ECO:0000269" key="7">
    <source>
    </source>
</evidence>
<evidence type="ECO:0000269" key="8">
    <source>
    </source>
</evidence>
<evidence type="ECO:0000269" key="9">
    <source>
    </source>
</evidence>
<evidence type="ECO:0000269" key="10">
    <source>
    </source>
</evidence>
<evidence type="ECO:0000269" key="11">
    <source>
    </source>
</evidence>
<evidence type="ECO:0000269" key="12">
    <source>
    </source>
</evidence>
<evidence type="ECO:0000269" key="13">
    <source>
    </source>
</evidence>
<evidence type="ECO:0000269" key="14">
    <source>
    </source>
</evidence>
<evidence type="ECO:0000303" key="15">
    <source>
    </source>
</evidence>
<evidence type="ECO:0000312" key="16">
    <source>
        <dbReference type="FlyBase" id="FBgn0002775"/>
    </source>
</evidence>
<evidence type="ECO:0007744" key="17">
    <source>
        <dbReference type="PDB" id="3M9Q"/>
    </source>
</evidence>
<evidence type="ECO:0007829" key="18">
    <source>
        <dbReference type="PDB" id="3M9Q"/>
    </source>
</evidence>